<gene>
    <name evidence="2" type="primary">Stn1</name>
    <name type="synonym">Obfc1</name>
</gene>
<feature type="initiator methionine" description="Removed" evidence="3">
    <location>
        <position position="1"/>
    </location>
</feature>
<feature type="chain" id="PRO_0000058021" description="CST complex subunit STN1">
    <location>
        <begin position="2"/>
        <end position="378"/>
    </location>
</feature>
<feature type="DNA-binding region" description="OB">
    <location>
        <begin position="64"/>
        <end position="165"/>
    </location>
</feature>
<feature type="region of interest" description="Interaction with CTC1" evidence="2">
    <location>
        <begin position="8"/>
        <end position="195"/>
    </location>
</feature>
<feature type="region of interest" description="Winged helix-turn-helix (wHTH) 1" evidence="1">
    <location>
        <begin position="201"/>
        <end position="305"/>
    </location>
</feature>
<feature type="region of interest" description="Winged helix-turn-helix (wHTH) 2" evidence="1">
    <location>
        <begin position="306"/>
        <end position="378"/>
    </location>
</feature>
<feature type="mutagenesis site" description="Impairs single-stranded DNA binding; when associated with A-151." evidence="3">
    <original>W</original>
    <variation>A</variation>
    <location>
        <position position="96"/>
    </location>
</feature>
<feature type="mutagenesis site" description="Impairs single-stranded DNA binding; when associated with A-96." evidence="3">
    <original>F</original>
    <variation>A</variation>
    <location>
        <position position="151"/>
    </location>
</feature>
<feature type="sequence conflict" description="In Ref. 3; AAH29548." evidence="7" ref="3">
    <original>N</original>
    <variation>K</variation>
    <location>
        <position position="339"/>
    </location>
</feature>
<feature type="helix" evidence="8">
    <location>
        <begin position="211"/>
        <end position="229"/>
    </location>
</feature>
<feature type="helix" evidence="8">
    <location>
        <begin position="236"/>
        <end position="240"/>
    </location>
</feature>
<feature type="helix" evidence="8">
    <location>
        <begin position="243"/>
        <end position="249"/>
    </location>
</feature>
<feature type="helix" evidence="8">
    <location>
        <begin position="271"/>
        <end position="287"/>
    </location>
</feature>
<feature type="strand" evidence="8">
    <location>
        <begin position="289"/>
        <end position="291"/>
    </location>
</feature>
<feature type="strand" evidence="8">
    <location>
        <begin position="296"/>
        <end position="298"/>
    </location>
</feature>
<feature type="strand" evidence="8">
    <location>
        <begin position="301"/>
        <end position="303"/>
    </location>
</feature>
<feature type="strand" evidence="8">
    <location>
        <begin position="305"/>
        <end position="307"/>
    </location>
</feature>
<proteinExistence type="evidence at protein level"/>
<organism>
    <name type="scientific">Mus musculus</name>
    <name type="common">Mouse</name>
    <dbReference type="NCBI Taxonomy" id="10090"/>
    <lineage>
        <taxon>Eukaryota</taxon>
        <taxon>Metazoa</taxon>
        <taxon>Chordata</taxon>
        <taxon>Craniata</taxon>
        <taxon>Vertebrata</taxon>
        <taxon>Euteleostomi</taxon>
        <taxon>Mammalia</taxon>
        <taxon>Eutheria</taxon>
        <taxon>Euarchontoglires</taxon>
        <taxon>Glires</taxon>
        <taxon>Rodentia</taxon>
        <taxon>Myomorpha</taxon>
        <taxon>Muroidea</taxon>
        <taxon>Muridae</taxon>
        <taxon>Murinae</taxon>
        <taxon>Mus</taxon>
        <taxon>Mus</taxon>
    </lineage>
</organism>
<dbReference type="EMBL" id="AK075574">
    <property type="protein sequence ID" value="BAC35830.1"/>
    <property type="molecule type" value="mRNA"/>
</dbReference>
<dbReference type="EMBL" id="AK146929">
    <property type="protein sequence ID" value="BAE27540.1"/>
    <property type="molecule type" value="mRNA"/>
</dbReference>
<dbReference type="EMBL" id="AK164386">
    <property type="protein sequence ID" value="BAE37766.1"/>
    <property type="molecule type" value="mRNA"/>
</dbReference>
<dbReference type="EMBL" id="CH466534">
    <property type="protein sequence ID" value="EDL42035.1"/>
    <property type="molecule type" value="Genomic_DNA"/>
</dbReference>
<dbReference type="EMBL" id="BC029548">
    <property type="protein sequence ID" value="AAH29548.1"/>
    <property type="status" value="ALT_INIT"/>
    <property type="molecule type" value="mRNA"/>
</dbReference>
<dbReference type="CCDS" id="CCDS29892.1"/>
<dbReference type="RefSeq" id="NP_780569.1">
    <property type="nucleotide sequence ID" value="NM_175360.3"/>
</dbReference>
<dbReference type="RefSeq" id="XP_030106555.1">
    <property type="nucleotide sequence ID" value="XM_030250695.1"/>
</dbReference>
<dbReference type="PDB" id="1WJ5">
    <property type="method" value="NMR"/>
    <property type="chains" value="A=205-311"/>
</dbReference>
<dbReference type="PDBsum" id="1WJ5"/>
<dbReference type="SMR" id="Q8K2X3"/>
<dbReference type="BioGRID" id="224373">
    <property type="interactions" value="6"/>
</dbReference>
<dbReference type="ComplexPortal" id="CPX-2130">
    <property type="entry name" value="CST complex"/>
</dbReference>
<dbReference type="FunCoup" id="Q8K2X3">
    <property type="interactions" value="1152"/>
</dbReference>
<dbReference type="IntAct" id="Q8K2X3">
    <property type="interactions" value="7"/>
</dbReference>
<dbReference type="STRING" id="10090.ENSMUSP00000040944"/>
<dbReference type="iPTMnet" id="Q8K2X3"/>
<dbReference type="PhosphoSitePlus" id="Q8K2X3"/>
<dbReference type="SwissPalm" id="Q8K2X3"/>
<dbReference type="PaxDb" id="10090-ENSMUSP00000040944"/>
<dbReference type="PeptideAtlas" id="Q8K2X3"/>
<dbReference type="ProteomicsDB" id="258642"/>
<dbReference type="Pumba" id="Q8K2X3"/>
<dbReference type="Antibodypedia" id="31566">
    <property type="antibodies" value="187 antibodies from 22 providers"/>
</dbReference>
<dbReference type="DNASU" id="108689"/>
<dbReference type="Ensembl" id="ENSMUST00000049369.16">
    <property type="protein sequence ID" value="ENSMUSP00000040944.9"/>
    <property type="gene ID" value="ENSMUSG00000042694.18"/>
</dbReference>
<dbReference type="GeneID" id="108689"/>
<dbReference type="KEGG" id="mmu:108689"/>
<dbReference type="UCSC" id="uc008hvb.1">
    <property type="organism name" value="mouse"/>
</dbReference>
<dbReference type="AGR" id="MGI:1915581"/>
<dbReference type="CTD" id="79991"/>
<dbReference type="MGI" id="MGI:1915581">
    <property type="gene designation" value="Stn1"/>
</dbReference>
<dbReference type="VEuPathDB" id="HostDB:ENSMUSG00000042694"/>
<dbReference type="eggNOG" id="KOG3108">
    <property type="taxonomic scope" value="Eukaryota"/>
</dbReference>
<dbReference type="GeneTree" id="ENSGT00390000000909"/>
<dbReference type="HOGENOM" id="CLU_063889_0_0_1"/>
<dbReference type="InParanoid" id="Q8K2X3"/>
<dbReference type="OMA" id="LCWKDEK"/>
<dbReference type="OrthoDB" id="77828at2759"/>
<dbReference type="PhylomeDB" id="Q8K2X3"/>
<dbReference type="TreeFam" id="TF328623"/>
<dbReference type="Reactome" id="R-MMU-174411">
    <property type="pathway name" value="Polymerase switching on the C-strand of the telomere"/>
</dbReference>
<dbReference type="Reactome" id="R-MMU-174430">
    <property type="pathway name" value="Telomere C-strand synthesis initiation"/>
</dbReference>
<dbReference type="BioGRID-ORCS" id="108689">
    <property type="hits" value="8 hits in 78 CRISPR screens"/>
</dbReference>
<dbReference type="ChiTaRS" id="Stn1">
    <property type="organism name" value="mouse"/>
</dbReference>
<dbReference type="EvolutionaryTrace" id="Q8K2X3"/>
<dbReference type="PRO" id="PR:Q8K2X3"/>
<dbReference type="Proteomes" id="UP000000589">
    <property type="component" value="Chromosome 19"/>
</dbReference>
<dbReference type="RNAct" id="Q8K2X3">
    <property type="molecule type" value="protein"/>
</dbReference>
<dbReference type="Bgee" id="ENSMUSG00000042694">
    <property type="expression patterns" value="Expressed in spermatocyte and 182 other cell types or tissues"/>
</dbReference>
<dbReference type="ExpressionAtlas" id="Q8K2X3">
    <property type="expression patterns" value="baseline and differential"/>
</dbReference>
<dbReference type="GO" id="GO:0000781">
    <property type="term" value="C:chromosome, telomeric region"/>
    <property type="evidence" value="ECO:0000314"/>
    <property type="project" value="UniProtKB"/>
</dbReference>
<dbReference type="GO" id="GO:1990879">
    <property type="term" value="C:CST complex"/>
    <property type="evidence" value="ECO:0000314"/>
    <property type="project" value="UniProtKB"/>
</dbReference>
<dbReference type="GO" id="GO:0001650">
    <property type="term" value="C:fibrillar center"/>
    <property type="evidence" value="ECO:0007669"/>
    <property type="project" value="Ensembl"/>
</dbReference>
<dbReference type="GO" id="GO:0045111">
    <property type="term" value="C:intermediate filament cytoskeleton"/>
    <property type="evidence" value="ECO:0007669"/>
    <property type="project" value="Ensembl"/>
</dbReference>
<dbReference type="GO" id="GO:0005654">
    <property type="term" value="C:nucleoplasm"/>
    <property type="evidence" value="ECO:0007669"/>
    <property type="project" value="Ensembl"/>
</dbReference>
<dbReference type="GO" id="GO:0005634">
    <property type="term" value="C:nucleus"/>
    <property type="evidence" value="ECO:0000314"/>
    <property type="project" value="UniProtKB"/>
</dbReference>
<dbReference type="GO" id="GO:0003697">
    <property type="term" value="F:single-stranded DNA binding"/>
    <property type="evidence" value="ECO:0000314"/>
    <property type="project" value="UniProtKB"/>
</dbReference>
<dbReference type="GO" id="GO:0043047">
    <property type="term" value="F:single-stranded telomeric DNA binding"/>
    <property type="evidence" value="ECO:0000250"/>
    <property type="project" value="UniProtKB"/>
</dbReference>
<dbReference type="GO" id="GO:0042162">
    <property type="term" value="F:telomeric DNA binding"/>
    <property type="evidence" value="ECO:0000314"/>
    <property type="project" value="BHF-UCL"/>
</dbReference>
<dbReference type="GO" id="GO:0032211">
    <property type="term" value="P:negative regulation of telomere maintenance via telomerase"/>
    <property type="evidence" value="ECO:0007669"/>
    <property type="project" value="Ensembl"/>
</dbReference>
<dbReference type="GO" id="GO:0045740">
    <property type="term" value="P:positive regulation of DNA replication"/>
    <property type="evidence" value="ECO:0000314"/>
    <property type="project" value="UniProtKB"/>
</dbReference>
<dbReference type="GO" id="GO:0016233">
    <property type="term" value="P:telomere capping"/>
    <property type="evidence" value="ECO:0007669"/>
    <property type="project" value="InterPro"/>
</dbReference>
<dbReference type="GO" id="GO:0010833">
    <property type="term" value="P:telomere maintenance via telomere lengthening"/>
    <property type="evidence" value="ECO:0000250"/>
    <property type="project" value="UniProtKB"/>
</dbReference>
<dbReference type="CDD" id="cd04483">
    <property type="entry name" value="hOBFC1_like"/>
    <property type="match status" value="1"/>
</dbReference>
<dbReference type="FunFam" id="1.10.10.10:FF:000275">
    <property type="entry name" value="CST complex subunit STN1"/>
    <property type="match status" value="1"/>
</dbReference>
<dbReference type="FunFam" id="1.10.10.980:FF:000001">
    <property type="entry name" value="CST complex subunit STN1"/>
    <property type="match status" value="1"/>
</dbReference>
<dbReference type="FunFam" id="2.40.50.140:FF:000181">
    <property type="entry name" value="CST complex subunit STN1"/>
    <property type="match status" value="1"/>
</dbReference>
<dbReference type="Gene3D" id="1.10.10.980">
    <property type="entry name" value="CST, Suppressor of Cdc13 homolog, complex subunit STN1, N-terminal domain"/>
    <property type="match status" value="1"/>
</dbReference>
<dbReference type="Gene3D" id="2.40.50.140">
    <property type="entry name" value="Nucleic acid-binding proteins"/>
    <property type="match status" value="1"/>
</dbReference>
<dbReference type="Gene3D" id="1.10.10.10">
    <property type="entry name" value="Winged helix-like DNA-binding domain superfamily/Winged helix DNA-binding domain"/>
    <property type="match status" value="1"/>
</dbReference>
<dbReference type="InterPro" id="IPR015253">
    <property type="entry name" value="CST_STN1_C"/>
</dbReference>
<dbReference type="InterPro" id="IPR042082">
    <property type="entry name" value="CST_Stn1_wHTH1_sf"/>
</dbReference>
<dbReference type="InterPro" id="IPR012340">
    <property type="entry name" value="NA-bd_OB-fold"/>
</dbReference>
<dbReference type="InterPro" id="IPR040260">
    <property type="entry name" value="RFA2-like"/>
</dbReference>
<dbReference type="InterPro" id="IPR014647">
    <property type="entry name" value="Stn1"/>
</dbReference>
<dbReference type="InterPro" id="IPR018856">
    <property type="entry name" value="Stn1_N"/>
</dbReference>
<dbReference type="InterPro" id="IPR036388">
    <property type="entry name" value="WH-like_DNA-bd_sf"/>
</dbReference>
<dbReference type="InterPro" id="IPR036390">
    <property type="entry name" value="WH_DNA-bd_sf"/>
</dbReference>
<dbReference type="PANTHER" id="PTHR13989:SF33">
    <property type="entry name" value="CST COMPLEX SUBUNIT STN1"/>
    <property type="match status" value="1"/>
</dbReference>
<dbReference type="PANTHER" id="PTHR13989">
    <property type="entry name" value="REPLICATION PROTEIN A-RELATED"/>
    <property type="match status" value="1"/>
</dbReference>
<dbReference type="Pfam" id="PF10451">
    <property type="entry name" value="Stn1"/>
    <property type="match status" value="1"/>
</dbReference>
<dbReference type="Pfam" id="PF09170">
    <property type="entry name" value="STN1_2"/>
    <property type="match status" value="1"/>
</dbReference>
<dbReference type="PIRSF" id="PIRSF036950">
    <property type="entry name" value="UCP036950"/>
    <property type="match status" value="1"/>
</dbReference>
<dbReference type="SUPFAM" id="SSF50249">
    <property type="entry name" value="Nucleic acid-binding proteins"/>
    <property type="match status" value="1"/>
</dbReference>
<dbReference type="SUPFAM" id="SSF46785">
    <property type="entry name" value="Winged helix' DNA-binding domain"/>
    <property type="match status" value="1"/>
</dbReference>
<keyword id="KW-0002">3D-structure</keyword>
<keyword id="KW-0158">Chromosome</keyword>
<keyword id="KW-0903">Direct protein sequencing</keyword>
<keyword id="KW-0238">DNA-binding</keyword>
<keyword id="KW-0539">Nucleus</keyword>
<keyword id="KW-1185">Reference proteome</keyword>
<keyword id="KW-0779">Telomere</keyword>
<name>STN1_MOUSE</name>
<sequence>MPQPCLLMECESSPREEEIPPLFWGLDPVFLAFAKLYIKDILEMKESQQVPGTYFYNGHPIRRVDIMGAVISVKERETFYSYGVDDATGVINCVCWKKLSNAESSSDPAILSTARELSMTSQLKKLQETIEQKTRIGIGDIIRVRGSVRMFREEREICANIYYKVDDPVWNMQIARMLELPKLYQKVYDQPFRNPALQEEEALNNKDNLDLAGLTSLLSEKIKEFLQEKKMQSFYQQELETVESLQSLASRPVTHSTGSDQVELKDSGTSGVAQRVFKNALQLLQEKGLVFQRDSGSDKLYYVTTKDKDLQQKIYHIIKEDCQKPNHMEKGCHLLHILNCVHLNLRWDLSKAVLQRVLELLEDQSDIVSTADHYYAAF</sequence>
<evidence type="ECO:0000250" key="1"/>
<evidence type="ECO:0000250" key="2">
    <source>
        <dbReference type="UniProtKB" id="Q9H668"/>
    </source>
</evidence>
<evidence type="ECO:0000269" key="3">
    <source>
    </source>
</evidence>
<evidence type="ECO:0000269" key="4">
    <source>
    </source>
</evidence>
<evidence type="ECO:0000269" key="5">
    <source>
    </source>
</evidence>
<evidence type="ECO:0000269" key="6">
    <source>
    </source>
</evidence>
<evidence type="ECO:0000305" key="7"/>
<evidence type="ECO:0007829" key="8">
    <source>
        <dbReference type="PDB" id="1WJ5"/>
    </source>
</evidence>
<accession>Q8K2X3</accession>
<accession>Q3TPH0</accession>
<accession>Q8C6I6</accession>
<protein>
    <recommendedName>
        <fullName evidence="2">CST complex subunit STN1</fullName>
    </recommendedName>
    <alternativeName>
        <fullName>Alpha-accessory factor of 44 kDa</fullName>
        <shortName>AAF-44</shortName>
        <shortName>AAF44</shortName>
    </alternativeName>
    <alternativeName>
        <fullName>Oligonucleotide/oligosaccharide-binding fold-containing protein 1</fullName>
    </alternativeName>
    <alternativeName>
        <fullName>Suppressor of cdc thirteen homolog</fullName>
    </alternativeName>
</protein>
<reference key="1">
    <citation type="journal article" date="2005" name="Science">
        <title>The transcriptional landscape of the mammalian genome.</title>
        <authorList>
            <person name="Carninci P."/>
            <person name="Kasukawa T."/>
            <person name="Katayama S."/>
            <person name="Gough J."/>
            <person name="Frith M.C."/>
            <person name="Maeda N."/>
            <person name="Oyama R."/>
            <person name="Ravasi T."/>
            <person name="Lenhard B."/>
            <person name="Wells C."/>
            <person name="Kodzius R."/>
            <person name="Shimokawa K."/>
            <person name="Bajic V.B."/>
            <person name="Brenner S.E."/>
            <person name="Batalov S."/>
            <person name="Forrest A.R."/>
            <person name="Zavolan M."/>
            <person name="Davis M.J."/>
            <person name="Wilming L.G."/>
            <person name="Aidinis V."/>
            <person name="Allen J.E."/>
            <person name="Ambesi-Impiombato A."/>
            <person name="Apweiler R."/>
            <person name="Aturaliya R.N."/>
            <person name="Bailey T.L."/>
            <person name="Bansal M."/>
            <person name="Baxter L."/>
            <person name="Beisel K.W."/>
            <person name="Bersano T."/>
            <person name="Bono H."/>
            <person name="Chalk A.M."/>
            <person name="Chiu K.P."/>
            <person name="Choudhary V."/>
            <person name="Christoffels A."/>
            <person name="Clutterbuck D.R."/>
            <person name="Crowe M.L."/>
            <person name="Dalla E."/>
            <person name="Dalrymple B.P."/>
            <person name="de Bono B."/>
            <person name="Della Gatta G."/>
            <person name="di Bernardo D."/>
            <person name="Down T."/>
            <person name="Engstrom P."/>
            <person name="Fagiolini M."/>
            <person name="Faulkner G."/>
            <person name="Fletcher C.F."/>
            <person name="Fukushima T."/>
            <person name="Furuno M."/>
            <person name="Futaki S."/>
            <person name="Gariboldi M."/>
            <person name="Georgii-Hemming P."/>
            <person name="Gingeras T.R."/>
            <person name="Gojobori T."/>
            <person name="Green R.E."/>
            <person name="Gustincich S."/>
            <person name="Harbers M."/>
            <person name="Hayashi Y."/>
            <person name="Hensch T.K."/>
            <person name="Hirokawa N."/>
            <person name="Hill D."/>
            <person name="Huminiecki L."/>
            <person name="Iacono M."/>
            <person name="Ikeo K."/>
            <person name="Iwama A."/>
            <person name="Ishikawa T."/>
            <person name="Jakt M."/>
            <person name="Kanapin A."/>
            <person name="Katoh M."/>
            <person name="Kawasawa Y."/>
            <person name="Kelso J."/>
            <person name="Kitamura H."/>
            <person name="Kitano H."/>
            <person name="Kollias G."/>
            <person name="Krishnan S.P."/>
            <person name="Kruger A."/>
            <person name="Kummerfeld S.K."/>
            <person name="Kurochkin I.V."/>
            <person name="Lareau L.F."/>
            <person name="Lazarevic D."/>
            <person name="Lipovich L."/>
            <person name="Liu J."/>
            <person name="Liuni S."/>
            <person name="McWilliam S."/>
            <person name="Madan Babu M."/>
            <person name="Madera M."/>
            <person name="Marchionni L."/>
            <person name="Matsuda H."/>
            <person name="Matsuzawa S."/>
            <person name="Miki H."/>
            <person name="Mignone F."/>
            <person name="Miyake S."/>
            <person name="Morris K."/>
            <person name="Mottagui-Tabar S."/>
            <person name="Mulder N."/>
            <person name="Nakano N."/>
            <person name="Nakauchi H."/>
            <person name="Ng P."/>
            <person name="Nilsson R."/>
            <person name="Nishiguchi S."/>
            <person name="Nishikawa S."/>
            <person name="Nori F."/>
            <person name="Ohara O."/>
            <person name="Okazaki Y."/>
            <person name="Orlando V."/>
            <person name="Pang K.C."/>
            <person name="Pavan W.J."/>
            <person name="Pavesi G."/>
            <person name="Pesole G."/>
            <person name="Petrovsky N."/>
            <person name="Piazza S."/>
            <person name="Reed J."/>
            <person name="Reid J.F."/>
            <person name="Ring B.Z."/>
            <person name="Ringwald M."/>
            <person name="Rost B."/>
            <person name="Ruan Y."/>
            <person name="Salzberg S.L."/>
            <person name="Sandelin A."/>
            <person name="Schneider C."/>
            <person name="Schoenbach C."/>
            <person name="Sekiguchi K."/>
            <person name="Semple C.A."/>
            <person name="Seno S."/>
            <person name="Sessa L."/>
            <person name="Sheng Y."/>
            <person name="Shibata Y."/>
            <person name="Shimada H."/>
            <person name="Shimada K."/>
            <person name="Silva D."/>
            <person name="Sinclair B."/>
            <person name="Sperling S."/>
            <person name="Stupka E."/>
            <person name="Sugiura K."/>
            <person name="Sultana R."/>
            <person name="Takenaka Y."/>
            <person name="Taki K."/>
            <person name="Tammoja K."/>
            <person name="Tan S.L."/>
            <person name="Tang S."/>
            <person name="Taylor M.S."/>
            <person name="Tegner J."/>
            <person name="Teichmann S.A."/>
            <person name="Ueda H.R."/>
            <person name="van Nimwegen E."/>
            <person name="Verardo R."/>
            <person name="Wei C.L."/>
            <person name="Yagi K."/>
            <person name="Yamanishi H."/>
            <person name="Zabarovsky E."/>
            <person name="Zhu S."/>
            <person name="Zimmer A."/>
            <person name="Hide W."/>
            <person name="Bult C."/>
            <person name="Grimmond S.M."/>
            <person name="Teasdale R.D."/>
            <person name="Liu E.T."/>
            <person name="Brusic V."/>
            <person name="Quackenbush J."/>
            <person name="Wahlestedt C."/>
            <person name="Mattick J.S."/>
            <person name="Hume D.A."/>
            <person name="Kai C."/>
            <person name="Sasaki D."/>
            <person name="Tomaru Y."/>
            <person name="Fukuda S."/>
            <person name="Kanamori-Katayama M."/>
            <person name="Suzuki M."/>
            <person name="Aoki J."/>
            <person name="Arakawa T."/>
            <person name="Iida J."/>
            <person name="Imamura K."/>
            <person name="Itoh M."/>
            <person name="Kato T."/>
            <person name="Kawaji H."/>
            <person name="Kawagashira N."/>
            <person name="Kawashima T."/>
            <person name="Kojima M."/>
            <person name="Kondo S."/>
            <person name="Konno H."/>
            <person name="Nakano K."/>
            <person name="Ninomiya N."/>
            <person name="Nishio T."/>
            <person name="Okada M."/>
            <person name="Plessy C."/>
            <person name="Shibata K."/>
            <person name="Shiraki T."/>
            <person name="Suzuki S."/>
            <person name="Tagami M."/>
            <person name="Waki K."/>
            <person name="Watahiki A."/>
            <person name="Okamura-Oho Y."/>
            <person name="Suzuki H."/>
            <person name="Kawai J."/>
            <person name="Hayashizaki Y."/>
        </authorList>
    </citation>
    <scope>NUCLEOTIDE SEQUENCE [LARGE SCALE MRNA]</scope>
    <source>
        <strain>C57BL/6J</strain>
        <tissue>Heart</tissue>
        <tissue>Kidney</tissue>
        <tissue>Spinal ganglion</tissue>
    </source>
</reference>
<reference key="2">
    <citation type="submission" date="2005-07" db="EMBL/GenBank/DDBJ databases">
        <authorList>
            <person name="Mural R.J."/>
            <person name="Adams M.D."/>
            <person name="Myers E.W."/>
            <person name="Smith H.O."/>
            <person name="Venter J.C."/>
        </authorList>
    </citation>
    <scope>NUCLEOTIDE SEQUENCE [LARGE SCALE GENOMIC DNA]</scope>
</reference>
<reference key="3">
    <citation type="journal article" date="2004" name="Genome Res.">
        <title>The status, quality, and expansion of the NIH full-length cDNA project: the Mammalian Gene Collection (MGC).</title>
        <authorList>
            <consortium name="The MGC Project Team"/>
        </authorList>
    </citation>
    <scope>NUCLEOTIDE SEQUENCE [LARGE SCALE MRNA]</scope>
    <source>
        <strain>Czech II</strain>
        <tissue>Mammary tumor</tissue>
    </source>
</reference>
<reference key="4">
    <citation type="journal article" date="2009" name="J. Biol. Chem.">
        <title>A DNA polymerase-{alpha}primase cofactor with homology to replication protein A-32 regulates DNA replication in mammalian cells.</title>
        <authorList>
            <person name="Casteel D.E."/>
            <person name="Zhuang S."/>
            <person name="Zeng Y."/>
            <person name="Perrino F.W."/>
            <person name="Boss G.R."/>
            <person name="Goulian M."/>
            <person name="Pilz R.B."/>
        </authorList>
    </citation>
    <scope>PROTEIN SEQUENCE OF 2-9; 136-143; 157-164; 166-176; 197-221 AND 357-375</scope>
    <scope>SUBCELLULAR LOCATION</scope>
    <scope>INTERACTION WITH CTC1</scope>
    <scope>DNA-BINDING</scope>
    <scope>MUTAGENESIS OF TRP-96 AND PHE-151</scope>
</reference>
<reference key="5">
    <citation type="journal article" date="2009" name="J. Biol. Chem.">
        <title>OB fold-containing protein 1 (OBFC1), a human homolog of yeast Stn1, associates with TPP1 and is implicated in telomere length regulation.</title>
        <authorList>
            <person name="Wan M."/>
            <person name="Qin J."/>
            <person name="Songyang Z."/>
            <person name="Liu D."/>
        </authorList>
    </citation>
    <scope>INTERACTION WITH ACD</scope>
</reference>
<reference key="6">
    <citation type="journal article" date="2009" name="Mol. Cell">
        <title>RPA-like mammalian Ctc1-Stn1-Ten1 complex binds to single-stranded DNA and protects telomeres independently of the Pot1 pathway.</title>
        <authorList>
            <person name="Miyake Y."/>
            <person name="Nakamura M."/>
            <person name="Nabetani A."/>
            <person name="Shimamura S."/>
            <person name="Tamura M."/>
            <person name="Yonehara S."/>
            <person name="Saito M."/>
            <person name="Ishikawa F."/>
        </authorList>
    </citation>
    <scope>FUNCTION</scope>
    <scope>IDENTIFICATION BY MASS SPECTROMETRY</scope>
    <scope>IDENTIFICATION IN THE CST COMPLEX</scope>
    <scope>SUBCELLULAR LOCATION</scope>
</reference>
<reference key="7">
    <citation type="journal article" date="2010" name="Cell">
        <title>A tissue-specific atlas of mouse protein phosphorylation and expression.</title>
        <authorList>
            <person name="Huttlin E.L."/>
            <person name="Jedrychowski M.P."/>
            <person name="Elias J.E."/>
            <person name="Goswami T."/>
            <person name="Rad R."/>
            <person name="Beausoleil S.A."/>
            <person name="Villen J."/>
            <person name="Haas W."/>
            <person name="Sowa M.E."/>
            <person name="Gygi S.P."/>
        </authorList>
    </citation>
    <scope>IDENTIFICATION BY MASS SPECTROMETRY [LARGE SCALE ANALYSIS]</scope>
    <source>
        <tissue>Lung</tissue>
        <tissue>Testis</tissue>
    </source>
</reference>
<reference key="8">
    <citation type="journal article" date="2012" name="Cell">
        <title>Telomeric 3' overhangs derive from resection by Exo1 and Apollo and fill-in by POT1b-associated CST.</title>
        <authorList>
            <person name="Wu P."/>
            <person name="Takai H."/>
            <person name="de Lange T."/>
        </authorList>
    </citation>
    <scope>FUNCTION</scope>
</reference>
<reference key="9">
    <citation type="submission" date="2004-11" db="PDB data bank">
        <title>Solution structure of the hypothetical domain of Riken cDNA 0610009H20.</title>
        <authorList>
            <consortium name="RIKEN structural genomics initiative (RSGI)"/>
        </authorList>
    </citation>
    <scope>STRUCTURE BY NMR OF 205-311</scope>
</reference>
<comment type="function">
    <text evidence="2 5 6">Component of the CST complex proposed to act as a specialized replication factor promoting DNA replication under conditions of replication stress or natural replication barriers such as the telomere duplex. The CST complex binds single-stranded DNA with high affinity in a sequence-independent manner, while isolated subunits bind DNA with low affinity by themselves. Initially the CST complex has been proposed to protect telomeres from DNA degradation (PubMed:19854130). However, the CST complex has been shown to be involved in several aspects of telomere replication. The CST complex inhibits telomerase and is involved in telomere length homeostasis; it is proposed to bind to newly telomerase-synthesized 3' overhangs and to terminate telomerase action implicating the association with the ACD:POT1 complex thus interfering with its telomerase stimulation activity. The CST complex is also proposed to be involved in fill-in synthesis of the telomeric C-strand probably implicating recruitment and activation of DNA polymerase alpha (PubMed:22748632). The CST complex facilitates recovery from many forms of exogenous DNA damage; seems to be involved in the re-initiation of DNA replication at repaired forks and/or dormant origins. Required for efficicient replication of the duplex region of the telomere. Promotes efficient replication of lagging-strand telomeres. Promotes general replication start following replication-fork stalling implicating new origin firing. May be in involved in C-strand fill-in during late S/G2 phase independent of its role in telomere duplex replication (By similarity).</text>
</comment>
<comment type="subunit">
    <text evidence="2 3 4 5">Component of the CST complex, composed of TEN1/C17orf106, CTC1/C17orf68 and STN1; in the complex interacts directly with TEN1 and CTC1 (PubMed:19119139, PubMed:19854130). Interacts with ACD/TPP1 (PubMed:19648609). Interacts with POT1 and POLA1 (By similarity).</text>
</comment>
<comment type="interaction">
    <interactant intactId="EBI-2553883">
        <id>Q8K2X3</id>
    </interactant>
    <interactant intactId="EBI-6258642">
        <id>Q5EE38</id>
        <label>Acd</label>
    </interactant>
    <organismsDiffer>false</organismsDiffer>
    <experiments>2</experiments>
</comment>
<comment type="subcellular location">
    <subcellularLocation>
        <location evidence="3 5">Nucleus</location>
    </subcellularLocation>
    <subcellularLocation>
        <location evidence="5">Chromosome</location>
        <location evidence="5">Telomere</location>
    </subcellularLocation>
</comment>
<comment type="similarity">
    <text evidence="7">Belongs to the STN1 family.</text>
</comment>
<comment type="caution">
    <text evidence="7">According to PubMed:19119139, it acts as a regulator of DNA replication. According to PubMed:19854130, this effect is indirect and it rather acts as a general regulator of DNA metabolism.</text>
</comment>
<comment type="sequence caution" evidence="7">
    <conflict type="erroneous initiation">
        <sequence resource="EMBL-CDS" id="AAH29548"/>
    </conflict>
</comment>